<proteinExistence type="evidence at transcript level"/>
<evidence type="ECO:0000250" key="1"/>
<evidence type="ECO:0000255" key="2">
    <source>
        <dbReference type="PROSITE-ProRule" id="PRU00448"/>
    </source>
</evidence>
<evidence type="ECO:0000256" key="3">
    <source>
        <dbReference type="SAM" id="MobiDB-lite"/>
    </source>
</evidence>
<evidence type="ECO:0000269" key="4">
    <source>
    </source>
</evidence>
<evidence type="ECO:0000305" key="5"/>
<organism>
    <name type="scientific">Arabidopsis thaliana</name>
    <name type="common">Mouse-ear cress</name>
    <dbReference type="NCBI Taxonomy" id="3702"/>
    <lineage>
        <taxon>Eukaryota</taxon>
        <taxon>Viridiplantae</taxon>
        <taxon>Streptophyta</taxon>
        <taxon>Embryophyta</taxon>
        <taxon>Tracheophyta</taxon>
        <taxon>Spermatophyta</taxon>
        <taxon>Magnoliopsida</taxon>
        <taxon>eudicotyledons</taxon>
        <taxon>Gunneridae</taxon>
        <taxon>Pentapetalae</taxon>
        <taxon>rosids</taxon>
        <taxon>malvids</taxon>
        <taxon>Brassicales</taxon>
        <taxon>Brassicaceae</taxon>
        <taxon>Camelineae</taxon>
        <taxon>Arabidopsis</taxon>
    </lineage>
</organism>
<dbReference type="EMBL" id="X68054">
    <property type="protein sequence ID" value="CAA48190.1"/>
    <property type="status" value="ALT_FRAME"/>
    <property type="molecule type" value="mRNA"/>
</dbReference>
<dbReference type="EMBL" id="AC005662">
    <property type="protein sequence ID" value="AAC78532.1"/>
    <property type="molecule type" value="Genomic_DNA"/>
</dbReference>
<dbReference type="EMBL" id="CP002685">
    <property type="protein sequence ID" value="AEC09970.1"/>
    <property type="molecule type" value="Genomic_DNA"/>
</dbReference>
<dbReference type="EMBL" id="AF360307">
    <property type="protein sequence ID" value="AAK26017.1"/>
    <property type="molecule type" value="mRNA"/>
</dbReference>
<dbReference type="EMBL" id="AY056357">
    <property type="protein sequence ID" value="AAL07243.1"/>
    <property type="molecule type" value="mRNA"/>
</dbReference>
<dbReference type="EMBL" id="AY084696">
    <property type="protein sequence ID" value="AAM61257.1"/>
    <property type="molecule type" value="mRNA"/>
</dbReference>
<dbReference type="PIR" id="D84841">
    <property type="entry name" value="D84841"/>
</dbReference>
<dbReference type="PIR" id="S29595">
    <property type="entry name" value="S29595"/>
</dbReference>
<dbReference type="RefSeq" id="NP_181672.1">
    <property type="nucleotide sequence ID" value="NM_129704.3"/>
</dbReference>
<dbReference type="SMR" id="P30188"/>
<dbReference type="BioGRID" id="4076">
    <property type="interactions" value="1"/>
</dbReference>
<dbReference type="FunCoup" id="P30188">
    <property type="interactions" value="296"/>
</dbReference>
<dbReference type="IntAct" id="P30188">
    <property type="interactions" value="1"/>
</dbReference>
<dbReference type="STRING" id="3702.P30188"/>
<dbReference type="iPTMnet" id="P30188"/>
<dbReference type="PaxDb" id="3702-AT2G41410.1"/>
<dbReference type="ProteomicsDB" id="240903"/>
<dbReference type="DNASU" id="818739"/>
<dbReference type="EnsemblPlants" id="AT2G41410.1">
    <property type="protein sequence ID" value="AT2G41410.1"/>
    <property type="gene ID" value="AT2G41410"/>
</dbReference>
<dbReference type="GeneID" id="818739"/>
<dbReference type="Gramene" id="AT2G41410.1">
    <property type="protein sequence ID" value="AT2G41410.1"/>
    <property type="gene ID" value="AT2G41410"/>
</dbReference>
<dbReference type="KEGG" id="ath:AT2G41410"/>
<dbReference type="Araport" id="AT2G41410"/>
<dbReference type="TAIR" id="AT2G41410"/>
<dbReference type="eggNOG" id="KOG0027">
    <property type="taxonomic scope" value="Eukaryota"/>
</dbReference>
<dbReference type="HOGENOM" id="CLU_061288_20_4_1"/>
<dbReference type="InParanoid" id="P30188"/>
<dbReference type="OMA" id="CMRMIAT"/>
<dbReference type="PhylomeDB" id="P30188"/>
<dbReference type="PRO" id="PR:P30188"/>
<dbReference type="Proteomes" id="UP000006548">
    <property type="component" value="Chromosome 2"/>
</dbReference>
<dbReference type="ExpressionAtlas" id="P30188">
    <property type="expression patterns" value="baseline and differential"/>
</dbReference>
<dbReference type="GO" id="GO:0005829">
    <property type="term" value="C:cytosol"/>
    <property type="evidence" value="ECO:0007005"/>
    <property type="project" value="TAIR"/>
</dbReference>
<dbReference type="GO" id="GO:0005509">
    <property type="term" value="F:calcium ion binding"/>
    <property type="evidence" value="ECO:0007669"/>
    <property type="project" value="InterPro"/>
</dbReference>
<dbReference type="CDD" id="cd00051">
    <property type="entry name" value="EFh"/>
    <property type="match status" value="2"/>
</dbReference>
<dbReference type="FunFam" id="1.10.238.10:FF:000338">
    <property type="entry name" value="Probable calcium-binding protein CML35"/>
    <property type="match status" value="1"/>
</dbReference>
<dbReference type="FunFam" id="1.10.238.10:FF:000508">
    <property type="entry name" value="Probable calcium-binding protein CML35"/>
    <property type="match status" value="1"/>
</dbReference>
<dbReference type="Gene3D" id="1.10.238.10">
    <property type="entry name" value="EF-hand"/>
    <property type="match status" value="2"/>
</dbReference>
<dbReference type="InterPro" id="IPR011992">
    <property type="entry name" value="EF-hand-dom_pair"/>
</dbReference>
<dbReference type="InterPro" id="IPR018247">
    <property type="entry name" value="EF_Hand_1_Ca_BS"/>
</dbReference>
<dbReference type="InterPro" id="IPR002048">
    <property type="entry name" value="EF_hand_dom"/>
</dbReference>
<dbReference type="InterPro" id="IPR039647">
    <property type="entry name" value="EF_hand_pair_protein_CML-like"/>
</dbReference>
<dbReference type="PANTHER" id="PTHR10891">
    <property type="entry name" value="EF-HAND CALCIUM-BINDING DOMAIN CONTAINING PROTEIN"/>
    <property type="match status" value="1"/>
</dbReference>
<dbReference type="Pfam" id="PF13499">
    <property type="entry name" value="EF-hand_7"/>
    <property type="match status" value="2"/>
</dbReference>
<dbReference type="SMART" id="SM00054">
    <property type="entry name" value="EFh"/>
    <property type="match status" value="3"/>
</dbReference>
<dbReference type="SUPFAM" id="SSF47473">
    <property type="entry name" value="EF-hand"/>
    <property type="match status" value="1"/>
</dbReference>
<dbReference type="PROSITE" id="PS00018">
    <property type="entry name" value="EF_HAND_1"/>
    <property type="match status" value="3"/>
</dbReference>
<dbReference type="PROSITE" id="PS50222">
    <property type="entry name" value="EF_HAND_2"/>
    <property type="match status" value="4"/>
</dbReference>
<accession>P30188</accession>
<accession>Q8LFR1</accession>
<accession>Q9SLG7</accession>
<name>CML35_ARATH</name>
<reference key="1">
    <citation type="journal article" date="1993" name="Plant Physiol.">
        <title>Arabidopsis thaliana cDNA encoding a novel member of the EF-hand superfamily of calcium-binding proteins.</title>
        <authorList>
            <person name="Bartling D."/>
            <person name="Buelter H."/>
            <person name="Weiler E.W."/>
        </authorList>
    </citation>
    <scope>NUCLEOTIDE SEQUENCE [MRNA]</scope>
    <source>
        <strain>cv. Landsberg erecta</strain>
        <tissue>Leaf</tissue>
    </source>
</reference>
<reference key="2">
    <citation type="journal article" date="1999" name="Nature">
        <title>Sequence and analysis of chromosome 2 of the plant Arabidopsis thaliana.</title>
        <authorList>
            <person name="Lin X."/>
            <person name="Kaul S."/>
            <person name="Rounsley S.D."/>
            <person name="Shea T.P."/>
            <person name="Benito M.-I."/>
            <person name="Town C.D."/>
            <person name="Fujii C.Y."/>
            <person name="Mason T.M."/>
            <person name="Bowman C.L."/>
            <person name="Barnstead M.E."/>
            <person name="Feldblyum T.V."/>
            <person name="Buell C.R."/>
            <person name="Ketchum K.A."/>
            <person name="Lee J.J."/>
            <person name="Ronning C.M."/>
            <person name="Koo H.L."/>
            <person name="Moffat K.S."/>
            <person name="Cronin L.A."/>
            <person name="Shen M."/>
            <person name="Pai G."/>
            <person name="Van Aken S."/>
            <person name="Umayam L."/>
            <person name="Tallon L.J."/>
            <person name="Gill J.E."/>
            <person name="Adams M.D."/>
            <person name="Carrera A.J."/>
            <person name="Creasy T.H."/>
            <person name="Goodman H.M."/>
            <person name="Somerville C.R."/>
            <person name="Copenhaver G.P."/>
            <person name="Preuss D."/>
            <person name="Nierman W.C."/>
            <person name="White O."/>
            <person name="Eisen J.A."/>
            <person name="Salzberg S.L."/>
            <person name="Fraser C.M."/>
            <person name="Venter J.C."/>
        </authorList>
    </citation>
    <scope>NUCLEOTIDE SEQUENCE [LARGE SCALE GENOMIC DNA]</scope>
    <source>
        <strain>cv. Columbia</strain>
    </source>
</reference>
<reference key="3">
    <citation type="journal article" date="2017" name="Plant J.">
        <title>Araport11: a complete reannotation of the Arabidopsis thaliana reference genome.</title>
        <authorList>
            <person name="Cheng C.Y."/>
            <person name="Krishnakumar V."/>
            <person name="Chan A.P."/>
            <person name="Thibaud-Nissen F."/>
            <person name="Schobel S."/>
            <person name="Town C.D."/>
        </authorList>
    </citation>
    <scope>GENOME REANNOTATION</scope>
    <source>
        <strain>cv. Columbia</strain>
    </source>
</reference>
<reference key="4">
    <citation type="journal article" date="2003" name="Science">
        <title>Empirical analysis of transcriptional activity in the Arabidopsis genome.</title>
        <authorList>
            <person name="Yamada K."/>
            <person name="Lim J."/>
            <person name="Dale J.M."/>
            <person name="Chen H."/>
            <person name="Shinn P."/>
            <person name="Palm C.J."/>
            <person name="Southwick A.M."/>
            <person name="Wu H.C."/>
            <person name="Kim C.J."/>
            <person name="Nguyen M."/>
            <person name="Pham P.K."/>
            <person name="Cheuk R.F."/>
            <person name="Karlin-Newmann G."/>
            <person name="Liu S.X."/>
            <person name="Lam B."/>
            <person name="Sakano H."/>
            <person name="Wu T."/>
            <person name="Yu G."/>
            <person name="Miranda M."/>
            <person name="Quach H.L."/>
            <person name="Tripp M."/>
            <person name="Chang C.H."/>
            <person name="Lee J.M."/>
            <person name="Toriumi M.J."/>
            <person name="Chan M.M."/>
            <person name="Tang C.C."/>
            <person name="Onodera C.S."/>
            <person name="Deng J.M."/>
            <person name="Akiyama K."/>
            <person name="Ansari Y."/>
            <person name="Arakawa T."/>
            <person name="Banh J."/>
            <person name="Banno F."/>
            <person name="Bowser L."/>
            <person name="Brooks S.Y."/>
            <person name="Carninci P."/>
            <person name="Chao Q."/>
            <person name="Choy N."/>
            <person name="Enju A."/>
            <person name="Goldsmith A.D."/>
            <person name="Gurjal M."/>
            <person name="Hansen N.F."/>
            <person name="Hayashizaki Y."/>
            <person name="Johnson-Hopson C."/>
            <person name="Hsuan V.W."/>
            <person name="Iida K."/>
            <person name="Karnes M."/>
            <person name="Khan S."/>
            <person name="Koesema E."/>
            <person name="Ishida J."/>
            <person name="Jiang P.X."/>
            <person name="Jones T."/>
            <person name="Kawai J."/>
            <person name="Kamiya A."/>
            <person name="Meyers C."/>
            <person name="Nakajima M."/>
            <person name="Narusaka M."/>
            <person name="Seki M."/>
            <person name="Sakurai T."/>
            <person name="Satou M."/>
            <person name="Tamse R."/>
            <person name="Vaysberg M."/>
            <person name="Wallender E.K."/>
            <person name="Wong C."/>
            <person name="Yamamura Y."/>
            <person name="Yuan S."/>
            <person name="Shinozaki K."/>
            <person name="Davis R.W."/>
            <person name="Theologis A."/>
            <person name="Ecker J.R."/>
        </authorList>
    </citation>
    <scope>NUCLEOTIDE SEQUENCE [LARGE SCALE MRNA]</scope>
    <source>
        <strain>cv. Columbia</strain>
    </source>
</reference>
<reference key="5">
    <citation type="submission" date="2002-03" db="EMBL/GenBank/DDBJ databases">
        <title>Full-length cDNA from Arabidopsis thaliana.</title>
        <authorList>
            <person name="Brover V.V."/>
            <person name="Troukhan M.E."/>
            <person name="Alexandrov N.A."/>
            <person name="Lu Y.-P."/>
            <person name="Flavell R.B."/>
            <person name="Feldmann K.A."/>
        </authorList>
    </citation>
    <scope>NUCLEOTIDE SEQUENCE [LARGE SCALE MRNA]</scope>
</reference>
<reference key="6">
    <citation type="journal article" date="2003" name="New Phytol.">
        <title>Calmodulins and related potential calcium sensors of Arabidopsis.</title>
        <authorList>
            <person name="McCormack E."/>
            <person name="Braam J."/>
        </authorList>
    </citation>
    <scope>GENE FAMILY</scope>
    <scope>NOMENCLATURE</scope>
</reference>
<reference key="7">
    <citation type="journal article" date="2005" name="New Phytol.">
        <title>Genome-wide identification of touch- and darkness-regulated Arabidopsis genes: a focus on calmodulin-like and XTH genes.</title>
        <authorList>
            <person name="Lee D."/>
            <person name="Polisensky D.H."/>
            <person name="Braam J."/>
        </authorList>
    </citation>
    <scope>INDUCTION</scope>
</reference>
<sequence>MKLAASLNRLSPKRLFRTKSKASVSRSEPSSFSSNASSSSSDGSYGNLKQGPTATPISVLPQNSGDFYTELVQAFKLIDRDDDGVVSRGDLAALISRLSHEPPSQEEVSLMLREVDGGDGGCISLEDLASRVAGTSGEGSVETEELREVFEIFDVDRNGKISAEELHRVFGVIGDERCTLEECMRMIATVDGNGDGFVCFDDFCRMMVPAMNDHHH</sequence>
<comment type="function">
    <text evidence="1">Potential calcium sensor.</text>
</comment>
<comment type="induction">
    <text evidence="4">During darkness conditions.</text>
</comment>
<comment type="caution">
    <text evidence="5">Although assigned as a calmodulin family member by Ref.6, it only contains EF-hand domains.</text>
</comment>
<comment type="sequence caution" evidence="5">
    <conflict type="frameshift">
        <sequence resource="EMBL-CDS" id="CAA48190"/>
    </conflict>
</comment>
<protein>
    <recommendedName>
        <fullName>Probable calcium-binding protein CML35</fullName>
    </recommendedName>
    <alternativeName>
        <fullName>Calmodulin-like protein 1</fullName>
    </alternativeName>
    <alternativeName>
        <fullName>Calmodulin-like protein 35</fullName>
    </alternativeName>
</protein>
<keyword id="KW-0106">Calcium</keyword>
<keyword id="KW-0479">Metal-binding</keyword>
<keyword id="KW-1185">Reference proteome</keyword>
<keyword id="KW-0677">Repeat</keyword>
<gene>
    <name type="primary">CML35</name>
    <name type="ordered locus">At2g41410</name>
    <name type="ORF">F13H10.4</name>
</gene>
<feature type="chain" id="PRO_0000073659" description="Probable calcium-binding protein CML35">
    <location>
        <begin position="1"/>
        <end position="216"/>
    </location>
</feature>
<feature type="domain" description="EF-hand 1" evidence="2">
    <location>
        <begin position="66"/>
        <end position="101"/>
    </location>
</feature>
<feature type="domain" description="EF-hand 2" evidence="2">
    <location>
        <begin position="103"/>
        <end position="138"/>
    </location>
</feature>
<feature type="domain" description="EF-hand 3" evidence="2">
    <location>
        <begin position="141"/>
        <end position="176"/>
    </location>
</feature>
<feature type="domain" description="EF-hand 4" evidence="2">
    <location>
        <begin position="178"/>
        <end position="213"/>
    </location>
</feature>
<feature type="region of interest" description="Disordered" evidence="3">
    <location>
        <begin position="18"/>
        <end position="58"/>
    </location>
</feature>
<feature type="compositionally biased region" description="Low complexity" evidence="3">
    <location>
        <begin position="23"/>
        <end position="44"/>
    </location>
</feature>
<feature type="binding site" evidence="2">
    <location>
        <position position="79"/>
    </location>
    <ligand>
        <name>Ca(2+)</name>
        <dbReference type="ChEBI" id="CHEBI:29108"/>
        <label>1</label>
    </ligand>
</feature>
<feature type="binding site" evidence="2">
    <location>
        <position position="81"/>
    </location>
    <ligand>
        <name>Ca(2+)</name>
        <dbReference type="ChEBI" id="CHEBI:29108"/>
        <label>1</label>
    </ligand>
</feature>
<feature type="binding site" evidence="2">
    <location>
        <position position="83"/>
    </location>
    <ligand>
        <name>Ca(2+)</name>
        <dbReference type="ChEBI" id="CHEBI:29108"/>
        <label>1</label>
    </ligand>
</feature>
<feature type="binding site" evidence="2">
    <location>
        <position position="90"/>
    </location>
    <ligand>
        <name>Ca(2+)</name>
        <dbReference type="ChEBI" id="CHEBI:29108"/>
        <label>1</label>
    </ligand>
</feature>
<feature type="binding site" evidence="2">
    <location>
        <position position="154"/>
    </location>
    <ligand>
        <name>Ca(2+)</name>
        <dbReference type="ChEBI" id="CHEBI:29108"/>
        <label>2</label>
    </ligand>
</feature>
<feature type="binding site" evidence="2">
    <location>
        <position position="156"/>
    </location>
    <ligand>
        <name>Ca(2+)</name>
        <dbReference type="ChEBI" id="CHEBI:29108"/>
        <label>2</label>
    </ligand>
</feature>
<feature type="binding site" evidence="2">
    <location>
        <position position="158"/>
    </location>
    <ligand>
        <name>Ca(2+)</name>
        <dbReference type="ChEBI" id="CHEBI:29108"/>
        <label>2</label>
    </ligand>
</feature>
<feature type="binding site" evidence="2">
    <location>
        <position position="160"/>
    </location>
    <ligand>
        <name>Ca(2+)</name>
        <dbReference type="ChEBI" id="CHEBI:29108"/>
        <label>2</label>
    </ligand>
</feature>
<feature type="binding site" evidence="2">
    <location>
        <position position="165"/>
    </location>
    <ligand>
        <name>Ca(2+)</name>
        <dbReference type="ChEBI" id="CHEBI:29108"/>
        <label>2</label>
    </ligand>
</feature>
<feature type="binding site" evidence="2">
    <location>
        <position position="191"/>
    </location>
    <ligand>
        <name>Ca(2+)</name>
        <dbReference type="ChEBI" id="CHEBI:29108"/>
        <label>3</label>
    </ligand>
</feature>
<feature type="binding site" evidence="2">
    <location>
        <position position="193"/>
    </location>
    <ligand>
        <name>Ca(2+)</name>
        <dbReference type="ChEBI" id="CHEBI:29108"/>
        <label>3</label>
    </ligand>
</feature>
<feature type="binding site" evidence="2">
    <location>
        <position position="195"/>
    </location>
    <ligand>
        <name>Ca(2+)</name>
        <dbReference type="ChEBI" id="CHEBI:29108"/>
        <label>3</label>
    </ligand>
</feature>
<feature type="binding site" evidence="2">
    <location>
        <position position="202"/>
    </location>
    <ligand>
        <name>Ca(2+)</name>
        <dbReference type="ChEBI" id="CHEBI:29108"/>
        <label>3</label>
    </ligand>
</feature>
<feature type="sequence conflict" description="In Ref. 5; AAM61257." evidence="5" ref="5">
    <original>V</original>
    <variation>A</variation>
    <location>
        <position position="208"/>
    </location>
</feature>